<proteinExistence type="inferred from homology"/>
<name>VICYC_BIPV3</name>
<sequence length="97" mass="11450">MLTKSRLQVFHELHCLNFLRKLIYPDVYGKIDYKGQIHANHCIDHIRRIAECGSNATPVVYTGYKNGNLYSEPETYTCRNFTLIRQWAEMKKIQNTQ</sequence>
<dbReference type="EC" id="1.-.-.-" evidence="5"/>
<dbReference type="EMBL" id="KI969054">
    <property type="protein sequence ID" value="EUN20434.1"/>
    <property type="molecule type" value="Genomic_DNA"/>
</dbReference>
<dbReference type="RefSeq" id="XP_014550008.1">
    <property type="nucleotide sequence ID" value="XM_014694522.1"/>
</dbReference>
<dbReference type="GeneID" id="26250974"/>
<dbReference type="HOGENOM" id="CLU_042941_7_2_1"/>
<dbReference type="OrthoDB" id="21320at28556"/>
<dbReference type="Proteomes" id="UP000054337">
    <property type="component" value="Unassembled WGS sequence"/>
</dbReference>
<dbReference type="GO" id="GO:0016491">
    <property type="term" value="F:oxidoreductase activity"/>
    <property type="evidence" value="ECO:0007669"/>
    <property type="project" value="UniProtKB-KW"/>
</dbReference>
<dbReference type="GO" id="GO:0043386">
    <property type="term" value="P:mycotoxin biosynthetic process"/>
    <property type="evidence" value="ECO:0007669"/>
    <property type="project" value="InterPro"/>
</dbReference>
<dbReference type="InterPro" id="IPR021765">
    <property type="entry name" value="UstYa-like"/>
</dbReference>
<dbReference type="PANTHER" id="PTHR33365:SF4">
    <property type="entry name" value="CYCLOCHLOROTINE BIOSYNTHESIS PROTEIN O"/>
    <property type="match status" value="1"/>
</dbReference>
<dbReference type="PANTHER" id="PTHR33365">
    <property type="entry name" value="YALI0B05434P"/>
    <property type="match status" value="1"/>
</dbReference>
<dbReference type="Pfam" id="PF11807">
    <property type="entry name" value="UstYa"/>
    <property type="match status" value="1"/>
</dbReference>
<keyword id="KW-0560">Oxidoreductase</keyword>
<keyword id="KW-0843">Virulence</keyword>
<reference key="1">
    <citation type="journal article" date="2013" name="PLoS Genet.">
        <title>Comparative genome structure, secondary metabolite, and effector coding capacity across Cochliobolus pathogens.</title>
        <authorList>
            <person name="Condon B.J."/>
            <person name="Leng Y."/>
            <person name="Wu D."/>
            <person name="Bushley K.E."/>
            <person name="Ohm R.A."/>
            <person name="Otillar R."/>
            <person name="Martin J."/>
            <person name="Schackwitz W."/>
            <person name="Grimwood J."/>
            <person name="MohdZainudin N."/>
            <person name="Xue C."/>
            <person name="Wang R."/>
            <person name="Manning V.A."/>
            <person name="Dhillon B."/>
            <person name="Tu Z.J."/>
            <person name="Steffenson B.J."/>
            <person name="Salamov A."/>
            <person name="Sun H."/>
            <person name="Lowry S."/>
            <person name="LaButti K."/>
            <person name="Han J."/>
            <person name="Copeland A."/>
            <person name="Lindquist E."/>
            <person name="Barry K."/>
            <person name="Schmutz J."/>
            <person name="Baker S.E."/>
            <person name="Ciuffetti L.M."/>
            <person name="Grigoriev I.V."/>
            <person name="Zhong S."/>
            <person name="Turgeon B.G."/>
        </authorList>
    </citation>
    <scope>NUCLEOTIDE SEQUENCE [LARGE SCALE GENOMIC DNA]</scope>
    <source>
        <strain>FI3</strain>
    </source>
</reference>
<reference key="2">
    <citation type="journal article" date="2020" name="Proc. Natl. Acad. Sci. U.S.A.">
        <title>Victorin, the host-selective cyclic peptide toxin from the oat pathogen Cochliobolus victoriae, is ribosomally encoded.</title>
        <authorList>
            <person name="Kessler S.C."/>
            <person name="Zhang X."/>
            <person name="McDonald M.C."/>
            <person name="Gilchrist C.L.M."/>
            <person name="Lin Z."/>
            <person name="Rightmyer A."/>
            <person name="Solomon P.S."/>
            <person name="Turgeon B.G."/>
            <person name="Chooi Y.H."/>
        </authorList>
    </citation>
    <scope>FUNCTION</scope>
</reference>
<protein>
    <recommendedName>
        <fullName evidence="3">UstYa family oxidase VicYc</fullName>
        <ecNumber evidence="5">1.-.-.-</ecNumber>
    </recommendedName>
    <alternativeName>
        <fullName evidence="3">Victorin biosynthesis cluster protein Yc</fullName>
    </alternativeName>
</protein>
<evidence type="ECO:0000250" key="1">
    <source>
        <dbReference type="UniProtKB" id="B8NM67"/>
    </source>
</evidence>
<evidence type="ECO:0000269" key="2">
    <source>
    </source>
</evidence>
<evidence type="ECO:0000303" key="3">
    <source>
    </source>
</evidence>
<evidence type="ECO:0000305" key="4"/>
<evidence type="ECO:0000305" key="5">
    <source>
    </source>
</evidence>
<feature type="chain" id="PRO_0000458345" description="UstYa family oxidase VicYc">
    <location>
        <begin position="1"/>
        <end position="97"/>
    </location>
</feature>
<feature type="short sequence motif" description="HXXHC 1" evidence="1">
    <location>
        <begin position="11"/>
        <end position="15"/>
    </location>
</feature>
<feature type="short sequence motif" description="HXXHC 2" evidence="1">
    <location>
        <begin position="38"/>
        <end position="42"/>
    </location>
</feature>
<comment type="function">
    <text evidence="2 5">UstYa family oxidase, part of the gene cluster that mediates the biosynthesis of the secondary metabolite victorin, the molecular basis for Victoria blight of oats (PubMed:32929037). The role of vicYc within the pathway has still to be determined (PubMed:32929037). The pathway starts with the processing of the precursor vicA1 by several endopeptidases including kexin proteases as well as the cluster-specific S28 family peptidases vicPa and vicPb to produce 7 identical copies of the hexapeptide Gly-Leu-Lys-Leu-Ala-Phe. After being excised from the precursor peptide, the core peptides are cyclized and modified post-translationally by enzymes encoded within the gene cluster. The ustYa family oxidase vicYb is required for the formation of the macrocycle in victorin and the copper amine oxidases (CAOs) vicK1 and vicK2 are responsible for converting victorin to the active form by oxidizing the N-terminal glycyl residue in the peptides to glyoxylate. Relaxed substrate specificity of enzymes in the victorin biosynthetic pathway results in a metabolic grid that produces a set of analogs including victorinines B, C, E or HV-toxin M (Probable).</text>
</comment>
<comment type="pathway">
    <text evidence="5">Mycotoxin biosynthesis.</text>
</comment>
<comment type="domain">
    <text evidence="1">The 2 HXXHC motifs are conserved in ustYa family proteins and might form active sites.</text>
</comment>
<comment type="similarity">
    <text evidence="4">Belongs to the ustYa family.</text>
</comment>
<organism>
    <name type="scientific">Bipolaris victoriae (strain FI3)</name>
    <name type="common">Victoria blight of oats agent</name>
    <name type="synonym">Cochliobolus victoriae</name>
    <dbReference type="NCBI Taxonomy" id="930091"/>
    <lineage>
        <taxon>Eukaryota</taxon>
        <taxon>Fungi</taxon>
        <taxon>Dikarya</taxon>
        <taxon>Ascomycota</taxon>
        <taxon>Pezizomycotina</taxon>
        <taxon>Dothideomycetes</taxon>
        <taxon>Pleosporomycetidae</taxon>
        <taxon>Pleosporales</taxon>
        <taxon>Pleosporineae</taxon>
        <taxon>Pleosporaceae</taxon>
        <taxon>Bipolaris</taxon>
    </lineage>
</organism>
<gene>
    <name evidence="3" type="primary">VicYc</name>
    <name type="ORF">COCVIDRAFT_116867</name>
</gene>
<accession>W7DZP2</accession>